<dbReference type="EMBL" id="AF127920">
    <property type="protein sequence ID" value="AAD43904.1"/>
    <property type="molecule type" value="mRNA"/>
</dbReference>
<dbReference type="EMBL" id="AF168775">
    <property type="protein sequence ID" value="AAF06738.1"/>
    <property type="molecule type" value="mRNA"/>
</dbReference>
<dbReference type="EMBL" id="BC065644">
    <property type="protein sequence ID" value="AAH65644.1"/>
    <property type="molecule type" value="mRNA"/>
</dbReference>
<dbReference type="RefSeq" id="NP_001333238.1">
    <property type="nucleotide sequence ID" value="NM_001346309.1"/>
</dbReference>
<dbReference type="RefSeq" id="NP_571443.3">
    <property type="nucleotide sequence ID" value="NM_131368.3"/>
</dbReference>
<dbReference type="RefSeq" id="XP_005173221.1">
    <property type="nucleotide sequence ID" value="XM_005173164.4"/>
</dbReference>
<dbReference type="RefSeq" id="XP_009289292.1">
    <property type="nucleotide sequence ID" value="XM_009291017.2"/>
</dbReference>
<dbReference type="SMR" id="Q9W7E7"/>
<dbReference type="FunCoup" id="Q9W7E7">
    <property type="interactions" value="2127"/>
</dbReference>
<dbReference type="STRING" id="7955.ENSDARP00000054174"/>
<dbReference type="PaxDb" id="7955-ENSDARP00000054174"/>
<dbReference type="Ensembl" id="ENSDART00000054175">
    <property type="protein sequence ID" value="ENSDARP00000054174"/>
    <property type="gene ID" value="ENSDARG00000037238"/>
</dbReference>
<dbReference type="Ensembl" id="ENSDART00000183347">
    <property type="protein sequence ID" value="ENSDARP00000155132"/>
    <property type="gene ID" value="ENSDARG00000037238"/>
</dbReference>
<dbReference type="Ensembl" id="ENSDART00000187280">
    <property type="protein sequence ID" value="ENSDARP00000153815"/>
    <property type="gene ID" value="ENSDARG00000037238"/>
</dbReference>
<dbReference type="Ensembl" id="ENSDART00000191084">
    <property type="protein sequence ID" value="ENSDARP00000149901"/>
    <property type="gene ID" value="ENSDARG00000037238"/>
</dbReference>
<dbReference type="Ensembl" id="ENSDART00000191143">
    <property type="protein sequence ID" value="ENSDARP00000154529"/>
    <property type="gene ID" value="ENSDARG00000037238"/>
</dbReference>
<dbReference type="GeneID" id="30641"/>
<dbReference type="KEGG" id="dre:30641"/>
<dbReference type="AGR" id="ZFIN:ZDB-GENE-990603-9"/>
<dbReference type="CTD" id="4090"/>
<dbReference type="ZFIN" id="ZDB-GENE-990603-9">
    <property type="gene designation" value="smad5"/>
</dbReference>
<dbReference type="eggNOG" id="KOG3701">
    <property type="taxonomic scope" value="Eukaryota"/>
</dbReference>
<dbReference type="HOGENOM" id="CLU_026736_0_2_1"/>
<dbReference type="InParanoid" id="Q9W7E7"/>
<dbReference type="OMA" id="QPMDTGN"/>
<dbReference type="OrthoDB" id="5794312at2759"/>
<dbReference type="PhylomeDB" id="Q9W7E7"/>
<dbReference type="TreeFam" id="TF314923"/>
<dbReference type="Reactome" id="R-DRE-201451">
    <property type="pathway name" value="Signaling by BMP"/>
</dbReference>
<dbReference type="SignaLink" id="Q9W7E7"/>
<dbReference type="PRO" id="PR:Q9W7E7"/>
<dbReference type="Proteomes" id="UP000000437">
    <property type="component" value="Chromosome 14"/>
</dbReference>
<dbReference type="Bgee" id="ENSDARG00000037238">
    <property type="expression patterns" value="Expressed in mature ovarian follicle and 31 other cell types or tissues"/>
</dbReference>
<dbReference type="ExpressionAtlas" id="Q9W7E7">
    <property type="expression patterns" value="baseline and differential"/>
</dbReference>
<dbReference type="GO" id="GO:0005737">
    <property type="term" value="C:cytoplasm"/>
    <property type="evidence" value="ECO:0007669"/>
    <property type="project" value="UniProtKB-SubCell"/>
</dbReference>
<dbReference type="GO" id="GO:0071144">
    <property type="term" value="C:heteromeric SMAD protein complex"/>
    <property type="evidence" value="ECO:0000318"/>
    <property type="project" value="GO_Central"/>
</dbReference>
<dbReference type="GO" id="GO:0003700">
    <property type="term" value="F:DNA-binding transcription factor activity"/>
    <property type="evidence" value="ECO:0000303"/>
    <property type="project" value="UniProtKB"/>
</dbReference>
<dbReference type="GO" id="GO:0000981">
    <property type="term" value="F:DNA-binding transcription factor activity, RNA polymerase II-specific"/>
    <property type="evidence" value="ECO:0000318"/>
    <property type="project" value="GO_Central"/>
</dbReference>
<dbReference type="GO" id="GO:0070411">
    <property type="term" value="F:I-SMAD binding"/>
    <property type="evidence" value="ECO:0000318"/>
    <property type="project" value="GO_Central"/>
</dbReference>
<dbReference type="GO" id="GO:0046872">
    <property type="term" value="F:metal ion binding"/>
    <property type="evidence" value="ECO:0007669"/>
    <property type="project" value="UniProtKB-KW"/>
</dbReference>
<dbReference type="GO" id="GO:0000978">
    <property type="term" value="F:RNA polymerase II cis-regulatory region sequence-specific DNA binding"/>
    <property type="evidence" value="ECO:0000318"/>
    <property type="project" value="GO_Central"/>
</dbReference>
<dbReference type="GO" id="GO:0000976">
    <property type="term" value="F:transcription cis-regulatory region binding"/>
    <property type="evidence" value="ECO:0000314"/>
    <property type="project" value="ZFIN"/>
</dbReference>
<dbReference type="GO" id="GO:0009653">
    <property type="term" value="P:anatomical structure morphogenesis"/>
    <property type="evidence" value="ECO:0000318"/>
    <property type="project" value="GO_Central"/>
</dbReference>
<dbReference type="GO" id="GO:0048514">
    <property type="term" value="P:blood vessel morphogenesis"/>
    <property type="evidence" value="ECO:0000316"/>
    <property type="project" value="ZFIN"/>
</dbReference>
<dbReference type="GO" id="GO:0030509">
    <property type="term" value="P:BMP signaling pathway"/>
    <property type="evidence" value="ECO:0000315"/>
    <property type="project" value="UniProtKB"/>
</dbReference>
<dbReference type="GO" id="GO:0030154">
    <property type="term" value="P:cell differentiation"/>
    <property type="evidence" value="ECO:0000318"/>
    <property type="project" value="GO_Central"/>
</dbReference>
<dbReference type="GO" id="GO:0007368">
    <property type="term" value="P:determination of left/right symmetry"/>
    <property type="evidence" value="ECO:0000315"/>
    <property type="project" value="ZFIN"/>
</dbReference>
<dbReference type="GO" id="GO:0048264">
    <property type="term" value="P:determination of ventral identity"/>
    <property type="evidence" value="ECO:0000314"/>
    <property type="project" value="ZFIN"/>
</dbReference>
<dbReference type="GO" id="GO:0060030">
    <property type="term" value="P:dorsal convergence"/>
    <property type="evidence" value="ECO:0000315"/>
    <property type="project" value="ZFIN"/>
</dbReference>
<dbReference type="GO" id="GO:0009953">
    <property type="term" value="P:dorsal/ventral pattern formation"/>
    <property type="evidence" value="ECO:0000315"/>
    <property type="project" value="ZFIN"/>
</dbReference>
<dbReference type="GO" id="GO:0003143">
    <property type="term" value="P:embryonic heart tube morphogenesis"/>
    <property type="evidence" value="ECO:0000315"/>
    <property type="project" value="ZFIN"/>
</dbReference>
<dbReference type="GO" id="GO:0009880">
    <property type="term" value="P:embryonic pattern specification"/>
    <property type="evidence" value="ECO:0000315"/>
    <property type="project" value="UniProtKB"/>
</dbReference>
<dbReference type="GO" id="GO:0001947">
    <property type="term" value="P:heart looping"/>
    <property type="evidence" value="ECO:0000315"/>
    <property type="project" value="ZFIN"/>
</dbReference>
<dbReference type="GO" id="GO:0001945">
    <property type="term" value="P:lymph vessel development"/>
    <property type="evidence" value="ECO:0000315"/>
    <property type="project" value="ZFIN"/>
</dbReference>
<dbReference type="GO" id="GO:0043049">
    <property type="term" value="P:otic placode formation"/>
    <property type="evidence" value="ECO:0000270"/>
    <property type="project" value="ZFIN"/>
</dbReference>
<dbReference type="GO" id="GO:0060037">
    <property type="term" value="P:pharyngeal system development"/>
    <property type="evidence" value="ECO:0000315"/>
    <property type="project" value="ZFIN"/>
</dbReference>
<dbReference type="GO" id="GO:0045893">
    <property type="term" value="P:positive regulation of DNA-templated transcription"/>
    <property type="evidence" value="ECO:0000314"/>
    <property type="project" value="ZFIN"/>
</dbReference>
<dbReference type="GO" id="GO:0036342">
    <property type="term" value="P:post-anal tail morphogenesis"/>
    <property type="evidence" value="ECO:0000315"/>
    <property type="project" value="ZFIN"/>
</dbReference>
<dbReference type="GO" id="GO:0048922">
    <property type="term" value="P:posterior lateral line neuromast deposition"/>
    <property type="evidence" value="ECO:0000315"/>
    <property type="project" value="ZFIN"/>
</dbReference>
<dbReference type="GO" id="GO:0048919">
    <property type="term" value="P:posterior lateral line neuromast development"/>
    <property type="evidence" value="ECO:0000315"/>
    <property type="project" value="ZFIN"/>
</dbReference>
<dbReference type="GO" id="GO:0031099">
    <property type="term" value="P:regeneration"/>
    <property type="evidence" value="ECO:0000315"/>
    <property type="project" value="ZFIN"/>
</dbReference>
<dbReference type="GO" id="GO:0030510">
    <property type="term" value="P:regulation of BMP signaling pathway"/>
    <property type="evidence" value="ECO:0000315"/>
    <property type="project" value="ZFIN"/>
</dbReference>
<dbReference type="GO" id="GO:0006355">
    <property type="term" value="P:regulation of DNA-templated transcription"/>
    <property type="evidence" value="ECO:0000303"/>
    <property type="project" value="UniProtKB"/>
</dbReference>
<dbReference type="GO" id="GO:0006357">
    <property type="term" value="P:regulation of transcription by RNA polymerase II"/>
    <property type="evidence" value="ECO:0000318"/>
    <property type="project" value="GO_Central"/>
</dbReference>
<dbReference type="GO" id="GO:0060021">
    <property type="term" value="P:roof of mouth development"/>
    <property type="evidence" value="ECO:0000315"/>
    <property type="project" value="ZFIN"/>
</dbReference>
<dbReference type="GO" id="GO:0060395">
    <property type="term" value="P:SMAD protein signal transduction"/>
    <property type="evidence" value="ECO:0000318"/>
    <property type="project" value="GO_Central"/>
</dbReference>
<dbReference type="GO" id="GO:0007179">
    <property type="term" value="P:transforming growth factor beta receptor signaling pathway"/>
    <property type="evidence" value="ECO:0000318"/>
    <property type="project" value="GO_Central"/>
</dbReference>
<dbReference type="CDD" id="cd10490">
    <property type="entry name" value="MH1_SMAD_1_5_9"/>
    <property type="match status" value="1"/>
</dbReference>
<dbReference type="CDD" id="cd10497">
    <property type="entry name" value="MH2_SMAD_1_5_9"/>
    <property type="match status" value="1"/>
</dbReference>
<dbReference type="FunFam" id="2.60.200.10:FF:000001">
    <property type="entry name" value="Mothers against decapentaplegic homolog"/>
    <property type="match status" value="1"/>
</dbReference>
<dbReference type="FunFam" id="3.90.520.10:FF:000001">
    <property type="entry name" value="Mothers against decapentaplegic homolog"/>
    <property type="match status" value="1"/>
</dbReference>
<dbReference type="Gene3D" id="2.60.200.10">
    <property type="match status" value="1"/>
</dbReference>
<dbReference type="Gene3D" id="3.90.520.10">
    <property type="entry name" value="SMAD MH1 domain"/>
    <property type="match status" value="1"/>
</dbReference>
<dbReference type="InterPro" id="IPR013790">
    <property type="entry name" value="Dwarfin"/>
</dbReference>
<dbReference type="InterPro" id="IPR003619">
    <property type="entry name" value="MAD_homology1_Dwarfin-type"/>
</dbReference>
<dbReference type="InterPro" id="IPR013019">
    <property type="entry name" value="MAD_homology_MH1"/>
</dbReference>
<dbReference type="InterPro" id="IPR017855">
    <property type="entry name" value="SMAD-like_dom_sf"/>
</dbReference>
<dbReference type="InterPro" id="IPR001132">
    <property type="entry name" value="SMAD_dom_Dwarfin-type"/>
</dbReference>
<dbReference type="InterPro" id="IPR008984">
    <property type="entry name" value="SMAD_FHA_dom_sf"/>
</dbReference>
<dbReference type="InterPro" id="IPR036578">
    <property type="entry name" value="SMAD_MH1_sf"/>
</dbReference>
<dbReference type="PANTHER" id="PTHR13703:SF36">
    <property type="entry name" value="MOTHERS AGAINST DECAPENTAPLEGIC HOMOLOG 5"/>
    <property type="match status" value="1"/>
</dbReference>
<dbReference type="PANTHER" id="PTHR13703">
    <property type="entry name" value="SMAD"/>
    <property type="match status" value="1"/>
</dbReference>
<dbReference type="Pfam" id="PF03165">
    <property type="entry name" value="MH1"/>
    <property type="match status" value="1"/>
</dbReference>
<dbReference type="Pfam" id="PF03166">
    <property type="entry name" value="MH2"/>
    <property type="match status" value="1"/>
</dbReference>
<dbReference type="SMART" id="SM00523">
    <property type="entry name" value="DWA"/>
    <property type="match status" value="1"/>
</dbReference>
<dbReference type="SMART" id="SM00524">
    <property type="entry name" value="DWB"/>
    <property type="match status" value="1"/>
</dbReference>
<dbReference type="SUPFAM" id="SSF56366">
    <property type="entry name" value="SMAD MH1 domain"/>
    <property type="match status" value="1"/>
</dbReference>
<dbReference type="SUPFAM" id="SSF49879">
    <property type="entry name" value="SMAD/FHA domain"/>
    <property type="match status" value="1"/>
</dbReference>
<dbReference type="PROSITE" id="PS51075">
    <property type="entry name" value="MH1"/>
    <property type="match status" value="1"/>
</dbReference>
<dbReference type="PROSITE" id="PS51076">
    <property type="entry name" value="MH2"/>
    <property type="match status" value="1"/>
</dbReference>
<accession>Q9W7E7</accession>
<reference key="1">
    <citation type="journal article" date="1999" name="Development">
        <title>The smad5 mutation somitabun blocks Bmp2b signaling during early dorsoventral patterning of the zebrafish embryo.</title>
        <authorList>
            <person name="Hild M."/>
            <person name="Dick A."/>
            <person name="Rauch G.J."/>
            <person name="Meier A."/>
            <person name="Bouwmeester T."/>
            <person name="Haffter P."/>
            <person name="Hammerschmidt M."/>
        </authorList>
    </citation>
    <scope>NUCLEOTIDE SEQUENCE [MRNA]</scope>
    <scope>VARIANT ILE-429</scope>
    <scope>FUNCTION</scope>
    <scope>DEVELOPMENTAL STAGE</scope>
    <source>
        <tissue>Embryo</tissue>
    </source>
</reference>
<reference key="2">
    <citation type="journal article" date="1999" name="Mech. Dev.">
        <title>Characterization of zebrafish smad1, smad2 and smad5: the amino-terminus of Smad1 and Smad5 is required for specific function in the embryo.</title>
        <authorList>
            <person name="Mueller F."/>
            <person name="Blader P."/>
            <person name="Rastegar S."/>
            <person name="Fischer N."/>
            <person name="Knoechel W."/>
            <person name="Straehle U."/>
        </authorList>
    </citation>
    <scope>NUCLEOTIDE SEQUENCE [MRNA]</scope>
    <scope>DEVELOPMENTAL STAGE</scope>
    <source>
        <tissue>Embryo</tissue>
    </source>
</reference>
<reference key="3">
    <citation type="submission" date="2004-01" db="EMBL/GenBank/DDBJ databases">
        <authorList>
            <consortium name="NIH - Zebrafish Gene Collection (ZGC) project"/>
        </authorList>
    </citation>
    <scope>NUCLEOTIDE SEQUENCE [LARGE SCALE MRNA]</scope>
    <source>
        <tissue>Embryo</tissue>
    </source>
</reference>
<reference key="4">
    <citation type="journal article" date="1999" name="Dev. Dyn.">
        <title>Smad1 and smad5 have distinct roles during dorsoventral patterning of the zebrafish embryo.</title>
        <authorList>
            <person name="Dick A."/>
            <person name="Meier A."/>
            <person name="Hammerschmidt M."/>
        </authorList>
    </citation>
    <scope>FUNCTION</scope>
</reference>
<comment type="function">
    <text evidence="5 7">Involved in ventralization. May mediate Bmp2b signaling during early phases of embryonic dorsal-ventral pattern formation. Required for initiation of Smad1 expression during gastrulation.</text>
</comment>
<comment type="subunit">
    <text evidence="1">May form trimers with the co-SMAD SMAD4.</text>
</comment>
<comment type="subcellular location">
    <subcellularLocation>
        <location evidence="1">Cytoplasm</location>
    </subcellularLocation>
    <subcellularLocation>
        <location evidence="1">Nucleus</location>
    </subcellularLocation>
    <text evidence="1">In the cytoplasm in the absence of ligand. Migration to the nucleus when complexed with SMAD4 (By similarity).</text>
</comment>
<comment type="developmental stage">
    <text evidence="5 6">Expressed both maternally and zygotically. Uniform distribution at the cleavage, blastula, gastrula and early somitogenesis stages. Levels decline during the early gastrula stages. At 26 hours, still expressed in the head, forming gut and dorsal neural tube.</text>
</comment>
<comment type="similarity">
    <text evidence="8">Belongs to the dwarfin/SMAD family.</text>
</comment>
<feature type="chain" id="PRO_0000090868" description="Mothers against decapentaplegic homolog 5">
    <location>
        <begin position="1"/>
        <end position="464"/>
    </location>
</feature>
<feature type="domain" description="MH1" evidence="2">
    <location>
        <begin position="13"/>
        <end position="137"/>
    </location>
</feature>
<feature type="domain" description="MH2" evidence="3">
    <location>
        <begin position="270"/>
        <end position="464"/>
    </location>
</feature>
<feature type="region of interest" description="Disordered" evidence="4">
    <location>
        <begin position="166"/>
        <end position="258"/>
    </location>
</feature>
<feature type="compositionally biased region" description="Polar residues" evidence="4">
    <location>
        <begin position="173"/>
        <end position="183"/>
    </location>
</feature>
<feature type="compositionally biased region" description="Low complexity" evidence="4">
    <location>
        <begin position="199"/>
        <end position="216"/>
    </location>
</feature>
<feature type="compositionally biased region" description="Polar residues" evidence="4">
    <location>
        <begin position="237"/>
        <end position="251"/>
    </location>
</feature>
<feature type="binding site" evidence="1">
    <location>
        <position position="65"/>
    </location>
    <ligand>
        <name>Zn(2+)</name>
        <dbReference type="ChEBI" id="CHEBI:29105"/>
    </ligand>
</feature>
<feature type="binding site" evidence="1">
    <location>
        <position position="110"/>
    </location>
    <ligand>
        <name>Zn(2+)</name>
        <dbReference type="ChEBI" id="CHEBI:29105"/>
    </ligand>
</feature>
<feature type="binding site" evidence="1">
    <location>
        <position position="122"/>
    </location>
    <ligand>
        <name>Zn(2+)</name>
        <dbReference type="ChEBI" id="CHEBI:29105"/>
    </ligand>
</feature>
<feature type="binding site" evidence="1">
    <location>
        <position position="127"/>
    </location>
    <ligand>
        <name>Zn(2+)</name>
        <dbReference type="ChEBI" id="CHEBI:29105"/>
    </ligand>
</feature>
<feature type="sequence variant" description="In allele DTC24; dorsalized embryos." evidence="5">
    <original>T</original>
    <variation>I</variation>
    <location>
        <position position="429"/>
    </location>
</feature>
<proteinExistence type="evidence at transcript level"/>
<gene>
    <name type="primary">smad5</name>
    <name type="synonym">madh5</name>
    <name type="synonym">sbn</name>
</gene>
<evidence type="ECO:0000250" key="1"/>
<evidence type="ECO:0000255" key="2">
    <source>
        <dbReference type="PROSITE-ProRule" id="PRU00438"/>
    </source>
</evidence>
<evidence type="ECO:0000255" key="3">
    <source>
        <dbReference type="PROSITE-ProRule" id="PRU00439"/>
    </source>
</evidence>
<evidence type="ECO:0000256" key="4">
    <source>
        <dbReference type="SAM" id="MobiDB-lite"/>
    </source>
</evidence>
<evidence type="ECO:0000269" key="5">
    <source>
    </source>
</evidence>
<evidence type="ECO:0000269" key="6">
    <source>
    </source>
</evidence>
<evidence type="ECO:0000269" key="7">
    <source>
    </source>
</evidence>
<evidence type="ECO:0000305" key="8"/>
<keyword id="KW-0963">Cytoplasm</keyword>
<keyword id="KW-0217">Developmental protein</keyword>
<keyword id="KW-0238">DNA-binding</keyword>
<keyword id="KW-0479">Metal-binding</keyword>
<keyword id="KW-0539">Nucleus</keyword>
<keyword id="KW-1185">Reference proteome</keyword>
<keyword id="KW-0804">Transcription</keyword>
<keyword id="KW-0805">Transcription regulation</keyword>
<keyword id="KW-0862">Zinc</keyword>
<protein>
    <recommendedName>
        <fullName>Mothers against decapentaplegic homolog 5</fullName>
        <shortName>MAD homolog 5</shortName>
        <shortName>Mothers against DPP homolog 5</shortName>
    </recommendedName>
    <alternativeName>
        <fullName>Protein somitabun</fullName>
    </alternativeName>
    <alternativeName>
        <fullName>SMAD family member 5</fullName>
        <shortName>SMAD 5</shortName>
        <shortName>Smad5</shortName>
    </alternativeName>
</protein>
<sequence>MTSMSSLFSFTSPAVKRLLGWKQGDEEEKWAEKAVDALVKKLKKKKGAMEDLEKALSSPGQPSKCVTIPRSLDGRLQVSHRKGLPHVIYCRVWRWPDLQSHHELKPLEVCEYPFGSKQKEVCINPYHYKRVESPVLPPVLVPRHSEFNPQHSLLVQFRNLSHNEPHMPLNATFPESFQQHSGGSSFPISPNSPYPPSPASSGTYPNSPASSGPSSPFQLPADTPPPAYMPPDEQMGQDGSQSMETGSSLAPQNMPRGDVQPVEYQEPSHWCSIVYYELNNRVGEAYHASSTSVLVDGFTDPSNNKNRFCLGLLSNVNRNSTIENTRRHIGKGVHLYYVGGEVYAECLSDTSIFVQSRNCNYHHGFHPTTVCKIPSGCSLKIFNNQEFAQLLAQSVNHGFEAVYELTKMCTIRMSFVKGWGAEYHRQDVTSTPCWIEVHLHGPLQWLDKVLTQMGSPLNPISSVS</sequence>
<organism>
    <name type="scientific">Danio rerio</name>
    <name type="common">Zebrafish</name>
    <name type="synonym">Brachydanio rerio</name>
    <dbReference type="NCBI Taxonomy" id="7955"/>
    <lineage>
        <taxon>Eukaryota</taxon>
        <taxon>Metazoa</taxon>
        <taxon>Chordata</taxon>
        <taxon>Craniata</taxon>
        <taxon>Vertebrata</taxon>
        <taxon>Euteleostomi</taxon>
        <taxon>Actinopterygii</taxon>
        <taxon>Neopterygii</taxon>
        <taxon>Teleostei</taxon>
        <taxon>Ostariophysi</taxon>
        <taxon>Cypriniformes</taxon>
        <taxon>Danionidae</taxon>
        <taxon>Danioninae</taxon>
        <taxon>Danio</taxon>
    </lineage>
</organism>
<name>SMAD5_DANRE</name>